<organism>
    <name type="scientific">Streptomyces griseus subsp. griseus (strain JCM 4626 / CBS 651.72 / NBRC 13350 / KCC S-0626 / ISP 5235)</name>
    <dbReference type="NCBI Taxonomy" id="455632"/>
    <lineage>
        <taxon>Bacteria</taxon>
        <taxon>Bacillati</taxon>
        <taxon>Actinomycetota</taxon>
        <taxon>Actinomycetes</taxon>
        <taxon>Kitasatosporales</taxon>
        <taxon>Streptomycetaceae</taxon>
        <taxon>Streptomyces</taxon>
    </lineage>
</organism>
<keyword id="KW-0028">Amino-acid biosynthesis</keyword>
<keyword id="KW-0963">Cytoplasm</keyword>
<keyword id="KW-0220">Diaminopimelate biosynthesis</keyword>
<keyword id="KW-0457">Lysine biosynthesis</keyword>
<keyword id="KW-0520">NAD</keyword>
<keyword id="KW-0521">NADP</keyword>
<keyword id="KW-0560">Oxidoreductase</keyword>
<reference key="1">
    <citation type="journal article" date="2008" name="J. Bacteriol.">
        <title>Genome sequence of the streptomycin-producing microorganism Streptomyces griseus IFO 13350.</title>
        <authorList>
            <person name="Ohnishi Y."/>
            <person name="Ishikawa J."/>
            <person name="Hara H."/>
            <person name="Suzuki H."/>
            <person name="Ikenoya M."/>
            <person name="Ikeda H."/>
            <person name="Yamashita A."/>
            <person name="Hattori M."/>
            <person name="Horinouchi S."/>
        </authorList>
    </citation>
    <scope>NUCLEOTIDE SEQUENCE [LARGE SCALE GENOMIC DNA]</scope>
    <source>
        <strain>JCM 4626 / CBS 651.72 / NBRC 13350 / KCC S-0626 / ISP 5235</strain>
    </source>
</reference>
<dbReference type="EC" id="1.17.1.8" evidence="1"/>
<dbReference type="EMBL" id="AP009493">
    <property type="protein sequence ID" value="BAG18610.1"/>
    <property type="molecule type" value="Genomic_DNA"/>
</dbReference>
<dbReference type="RefSeq" id="WP_003965852.1">
    <property type="nucleotide sequence ID" value="NC_010572.1"/>
</dbReference>
<dbReference type="SMR" id="B1VXZ4"/>
<dbReference type="KEGG" id="sgr:SGR_1781"/>
<dbReference type="eggNOG" id="COG0289">
    <property type="taxonomic scope" value="Bacteria"/>
</dbReference>
<dbReference type="HOGENOM" id="CLU_047479_0_1_11"/>
<dbReference type="UniPathway" id="UPA00034">
    <property type="reaction ID" value="UER00018"/>
</dbReference>
<dbReference type="Proteomes" id="UP000001685">
    <property type="component" value="Chromosome"/>
</dbReference>
<dbReference type="GO" id="GO:0005829">
    <property type="term" value="C:cytosol"/>
    <property type="evidence" value="ECO:0007669"/>
    <property type="project" value="TreeGrafter"/>
</dbReference>
<dbReference type="GO" id="GO:0008839">
    <property type="term" value="F:4-hydroxy-tetrahydrodipicolinate reductase"/>
    <property type="evidence" value="ECO:0007669"/>
    <property type="project" value="UniProtKB-EC"/>
</dbReference>
<dbReference type="GO" id="GO:0051287">
    <property type="term" value="F:NAD binding"/>
    <property type="evidence" value="ECO:0007669"/>
    <property type="project" value="UniProtKB-UniRule"/>
</dbReference>
<dbReference type="GO" id="GO:0050661">
    <property type="term" value="F:NADP binding"/>
    <property type="evidence" value="ECO:0007669"/>
    <property type="project" value="UniProtKB-UniRule"/>
</dbReference>
<dbReference type="GO" id="GO:0016726">
    <property type="term" value="F:oxidoreductase activity, acting on CH or CH2 groups, NAD or NADP as acceptor"/>
    <property type="evidence" value="ECO:0007669"/>
    <property type="project" value="UniProtKB-UniRule"/>
</dbReference>
<dbReference type="GO" id="GO:0019877">
    <property type="term" value="P:diaminopimelate biosynthetic process"/>
    <property type="evidence" value="ECO:0007669"/>
    <property type="project" value="UniProtKB-UniRule"/>
</dbReference>
<dbReference type="GO" id="GO:0009089">
    <property type="term" value="P:lysine biosynthetic process via diaminopimelate"/>
    <property type="evidence" value="ECO:0007669"/>
    <property type="project" value="UniProtKB-UniRule"/>
</dbReference>
<dbReference type="CDD" id="cd02274">
    <property type="entry name" value="DHDPR_N"/>
    <property type="match status" value="1"/>
</dbReference>
<dbReference type="FunFam" id="3.30.360.10:FF:000009">
    <property type="entry name" value="4-hydroxy-tetrahydrodipicolinate reductase"/>
    <property type="match status" value="1"/>
</dbReference>
<dbReference type="Gene3D" id="3.30.360.10">
    <property type="entry name" value="Dihydrodipicolinate Reductase, domain 2"/>
    <property type="match status" value="1"/>
</dbReference>
<dbReference type="Gene3D" id="3.40.50.720">
    <property type="entry name" value="NAD(P)-binding Rossmann-like Domain"/>
    <property type="match status" value="1"/>
</dbReference>
<dbReference type="HAMAP" id="MF_00102">
    <property type="entry name" value="DapB"/>
    <property type="match status" value="1"/>
</dbReference>
<dbReference type="InterPro" id="IPR022663">
    <property type="entry name" value="DapB_C"/>
</dbReference>
<dbReference type="InterPro" id="IPR000846">
    <property type="entry name" value="DapB_N"/>
</dbReference>
<dbReference type="InterPro" id="IPR022664">
    <property type="entry name" value="DapB_N_CS"/>
</dbReference>
<dbReference type="InterPro" id="IPR023940">
    <property type="entry name" value="DHDPR_bac"/>
</dbReference>
<dbReference type="InterPro" id="IPR036291">
    <property type="entry name" value="NAD(P)-bd_dom_sf"/>
</dbReference>
<dbReference type="NCBIfam" id="TIGR00036">
    <property type="entry name" value="dapB"/>
    <property type="match status" value="1"/>
</dbReference>
<dbReference type="PANTHER" id="PTHR20836:SF0">
    <property type="entry name" value="4-HYDROXY-TETRAHYDRODIPICOLINATE REDUCTASE 1, CHLOROPLASTIC-RELATED"/>
    <property type="match status" value="1"/>
</dbReference>
<dbReference type="PANTHER" id="PTHR20836">
    <property type="entry name" value="DIHYDRODIPICOLINATE REDUCTASE"/>
    <property type="match status" value="1"/>
</dbReference>
<dbReference type="Pfam" id="PF05173">
    <property type="entry name" value="DapB_C"/>
    <property type="match status" value="1"/>
</dbReference>
<dbReference type="Pfam" id="PF01113">
    <property type="entry name" value="DapB_N"/>
    <property type="match status" value="1"/>
</dbReference>
<dbReference type="PIRSF" id="PIRSF000161">
    <property type="entry name" value="DHPR"/>
    <property type="match status" value="1"/>
</dbReference>
<dbReference type="SUPFAM" id="SSF55347">
    <property type="entry name" value="Glyceraldehyde-3-phosphate dehydrogenase-like, C-terminal domain"/>
    <property type="match status" value="1"/>
</dbReference>
<dbReference type="SUPFAM" id="SSF51735">
    <property type="entry name" value="NAD(P)-binding Rossmann-fold domains"/>
    <property type="match status" value="1"/>
</dbReference>
<dbReference type="PROSITE" id="PS01298">
    <property type="entry name" value="DAPB"/>
    <property type="match status" value="1"/>
</dbReference>
<comment type="function">
    <text evidence="1">Catalyzes the conversion of 4-hydroxy-tetrahydrodipicolinate (HTPA) to tetrahydrodipicolinate.</text>
</comment>
<comment type="catalytic activity">
    <reaction evidence="1">
        <text>(S)-2,3,4,5-tetrahydrodipicolinate + NAD(+) + H2O = (2S,4S)-4-hydroxy-2,3,4,5-tetrahydrodipicolinate + NADH + H(+)</text>
        <dbReference type="Rhea" id="RHEA:35323"/>
        <dbReference type="ChEBI" id="CHEBI:15377"/>
        <dbReference type="ChEBI" id="CHEBI:15378"/>
        <dbReference type="ChEBI" id="CHEBI:16845"/>
        <dbReference type="ChEBI" id="CHEBI:57540"/>
        <dbReference type="ChEBI" id="CHEBI:57945"/>
        <dbReference type="ChEBI" id="CHEBI:67139"/>
        <dbReference type="EC" id="1.17.1.8"/>
    </reaction>
</comment>
<comment type="catalytic activity">
    <reaction evidence="1">
        <text>(S)-2,3,4,5-tetrahydrodipicolinate + NADP(+) + H2O = (2S,4S)-4-hydroxy-2,3,4,5-tetrahydrodipicolinate + NADPH + H(+)</text>
        <dbReference type="Rhea" id="RHEA:35331"/>
        <dbReference type="ChEBI" id="CHEBI:15377"/>
        <dbReference type="ChEBI" id="CHEBI:15378"/>
        <dbReference type="ChEBI" id="CHEBI:16845"/>
        <dbReference type="ChEBI" id="CHEBI:57783"/>
        <dbReference type="ChEBI" id="CHEBI:58349"/>
        <dbReference type="ChEBI" id="CHEBI:67139"/>
        <dbReference type="EC" id="1.17.1.8"/>
    </reaction>
</comment>
<comment type="pathway">
    <text evidence="1">Amino-acid biosynthesis; L-lysine biosynthesis via DAP pathway; (S)-tetrahydrodipicolinate from L-aspartate: step 4/4.</text>
</comment>
<comment type="subcellular location">
    <subcellularLocation>
        <location evidence="1">Cytoplasm</location>
    </subcellularLocation>
</comment>
<comment type="similarity">
    <text evidence="1">Belongs to the DapB family.</text>
</comment>
<comment type="caution">
    <text evidence="3">Was originally thought to be a dihydrodipicolinate reductase (DHDPR), catalyzing the conversion of dihydrodipicolinate to tetrahydrodipicolinate. However, it was shown in E.coli that the substrate of the enzymatic reaction is not dihydrodipicolinate (DHDP) but in fact (2S,4S)-4-hydroxy-2,3,4,5-tetrahydrodipicolinic acid (HTPA), the product released by the DapA-catalyzed reaction.</text>
</comment>
<protein>
    <recommendedName>
        <fullName evidence="1">4-hydroxy-tetrahydrodipicolinate reductase</fullName>
        <shortName evidence="1">HTPA reductase</shortName>
        <ecNumber evidence="1">1.17.1.8</ecNumber>
    </recommendedName>
</protein>
<accession>B1VXZ4</accession>
<evidence type="ECO:0000255" key="1">
    <source>
        <dbReference type="HAMAP-Rule" id="MF_00102"/>
    </source>
</evidence>
<evidence type="ECO:0000256" key="2">
    <source>
        <dbReference type="SAM" id="MobiDB-lite"/>
    </source>
</evidence>
<evidence type="ECO:0000305" key="3"/>
<name>DAPB_STRGG</name>
<proteinExistence type="inferred from homology"/>
<feature type="chain" id="PRO_1000094009" description="4-hydroxy-tetrahydrodipicolinate reductase">
    <location>
        <begin position="1"/>
        <end position="250"/>
    </location>
</feature>
<feature type="region of interest" description="Disordered" evidence="2">
    <location>
        <begin position="158"/>
        <end position="177"/>
    </location>
</feature>
<feature type="active site" description="Proton donor/acceptor" evidence="1">
    <location>
        <position position="135"/>
    </location>
</feature>
<feature type="active site" description="Proton donor" evidence="1">
    <location>
        <position position="139"/>
    </location>
</feature>
<feature type="binding site" evidence="1">
    <location>
        <begin position="10"/>
        <end position="15"/>
    </location>
    <ligand>
        <name>NAD(+)</name>
        <dbReference type="ChEBI" id="CHEBI:57540"/>
    </ligand>
</feature>
<feature type="binding site" evidence="1">
    <location>
        <begin position="78"/>
        <end position="80"/>
    </location>
    <ligand>
        <name>NAD(+)</name>
        <dbReference type="ChEBI" id="CHEBI:57540"/>
    </ligand>
</feature>
<feature type="binding site" evidence="1">
    <location>
        <begin position="105"/>
        <end position="108"/>
    </location>
    <ligand>
        <name>NAD(+)</name>
        <dbReference type="ChEBI" id="CHEBI:57540"/>
    </ligand>
</feature>
<feature type="binding site" evidence="1">
    <location>
        <position position="136"/>
    </location>
    <ligand>
        <name>(S)-2,3,4,5-tetrahydrodipicolinate</name>
        <dbReference type="ChEBI" id="CHEBI:16845"/>
    </ligand>
</feature>
<feature type="binding site" evidence="1">
    <location>
        <begin position="145"/>
        <end position="146"/>
    </location>
    <ligand>
        <name>(S)-2,3,4,5-tetrahydrodipicolinate</name>
        <dbReference type="ChEBI" id="CHEBI:16845"/>
    </ligand>
</feature>
<gene>
    <name evidence="1" type="primary">dapB</name>
    <name type="ordered locus">SGR_1781</name>
</gene>
<sequence length="250" mass="26431">MSKLRVAVLGARGRIGSEAVRAVEAADDLELVAALGRGDRLETLTDTGAQAVVELTTPASVMENLDFCLRHGIHAVVGTTGWTDERLAQLNTWLDDSPSTGVLIAPNFSIGAVLTMKFAERAARYFESVEVVELHHPNKVDAPSGTATRTAQLIAAARAEAGSAPQPDATTTALDGARGADVDGVPVHAIRLRGLLAHQEVLLGGEGETLTIRHDSLHHSSFMPGILLGVRRVVTTPGLTFGLEHFLDLN</sequence>